<evidence type="ECO:0000250" key="1"/>
<evidence type="ECO:0000250" key="2">
    <source>
        <dbReference type="UniProtKB" id="O00182"/>
    </source>
</evidence>
<evidence type="ECO:0000250" key="3">
    <source>
        <dbReference type="UniProtKB" id="P97840"/>
    </source>
</evidence>
<evidence type="ECO:0000255" key="4">
    <source>
        <dbReference type="PROSITE-ProRule" id="PRU00639"/>
    </source>
</evidence>
<evidence type="ECO:0000256" key="5">
    <source>
        <dbReference type="SAM" id="MobiDB-lite"/>
    </source>
</evidence>
<evidence type="ECO:0000269" key="6">
    <source>
    </source>
</evidence>
<evidence type="ECO:0000269" key="7">
    <source>
    </source>
</evidence>
<evidence type="ECO:0000269" key="8">
    <source>
    </source>
</evidence>
<evidence type="ECO:0000269" key="9">
    <source>
    </source>
</evidence>
<evidence type="ECO:0000269" key="10">
    <source>
    </source>
</evidence>
<evidence type="ECO:0000269" key="11">
    <source>
    </source>
</evidence>
<evidence type="ECO:0000269" key="12">
    <source>
    </source>
</evidence>
<evidence type="ECO:0000303" key="13">
    <source>
    </source>
</evidence>
<evidence type="ECO:0000303" key="14">
    <source>
    </source>
</evidence>
<evidence type="ECO:0000305" key="15"/>
<evidence type="ECO:0000305" key="16">
    <source>
    </source>
</evidence>
<evidence type="ECO:0000312" key="17">
    <source>
        <dbReference type="EMBL" id="AAH03754.1"/>
    </source>
</evidence>
<evidence type="ECO:0007829" key="18">
    <source>
        <dbReference type="PDB" id="2D6M"/>
    </source>
</evidence>
<accession>O08573</accession>
<accession>O08572</accession>
<accession>Q3UKE5</accession>
<accession>Q99L83</accession>
<reference key="1">
    <citation type="journal article" date="1997" name="J. Biol. Chem.">
        <title>Identification and characterization of galectin-9, a novel beta-galactoside-binding mammalian lectin.</title>
        <authorList>
            <person name="Wada J."/>
            <person name="Kanwar Y.S."/>
        </authorList>
    </citation>
    <scope>NUCLEOTIDE SEQUENCE [MRNA] (ISOFORM 1)</scope>
    <scope>SUBCELLULAR LOCATION</scope>
    <source>
        <strain>CD-1</strain>
        <tissue>Kidney</tissue>
        <tissue>Small intestine</tissue>
    </source>
</reference>
<reference key="2">
    <citation type="journal article" date="2005" name="Science">
        <title>The transcriptional landscape of the mammalian genome.</title>
        <authorList>
            <person name="Carninci P."/>
            <person name="Kasukawa T."/>
            <person name="Katayama S."/>
            <person name="Gough J."/>
            <person name="Frith M.C."/>
            <person name="Maeda N."/>
            <person name="Oyama R."/>
            <person name="Ravasi T."/>
            <person name="Lenhard B."/>
            <person name="Wells C."/>
            <person name="Kodzius R."/>
            <person name="Shimokawa K."/>
            <person name="Bajic V.B."/>
            <person name="Brenner S.E."/>
            <person name="Batalov S."/>
            <person name="Forrest A.R."/>
            <person name="Zavolan M."/>
            <person name="Davis M.J."/>
            <person name="Wilming L.G."/>
            <person name="Aidinis V."/>
            <person name="Allen J.E."/>
            <person name="Ambesi-Impiombato A."/>
            <person name="Apweiler R."/>
            <person name="Aturaliya R.N."/>
            <person name="Bailey T.L."/>
            <person name="Bansal M."/>
            <person name="Baxter L."/>
            <person name="Beisel K.W."/>
            <person name="Bersano T."/>
            <person name="Bono H."/>
            <person name="Chalk A.M."/>
            <person name="Chiu K.P."/>
            <person name="Choudhary V."/>
            <person name="Christoffels A."/>
            <person name="Clutterbuck D.R."/>
            <person name="Crowe M.L."/>
            <person name="Dalla E."/>
            <person name="Dalrymple B.P."/>
            <person name="de Bono B."/>
            <person name="Della Gatta G."/>
            <person name="di Bernardo D."/>
            <person name="Down T."/>
            <person name="Engstrom P."/>
            <person name="Fagiolini M."/>
            <person name="Faulkner G."/>
            <person name="Fletcher C.F."/>
            <person name="Fukushima T."/>
            <person name="Furuno M."/>
            <person name="Futaki S."/>
            <person name="Gariboldi M."/>
            <person name="Georgii-Hemming P."/>
            <person name="Gingeras T.R."/>
            <person name="Gojobori T."/>
            <person name="Green R.E."/>
            <person name="Gustincich S."/>
            <person name="Harbers M."/>
            <person name="Hayashi Y."/>
            <person name="Hensch T.K."/>
            <person name="Hirokawa N."/>
            <person name="Hill D."/>
            <person name="Huminiecki L."/>
            <person name="Iacono M."/>
            <person name="Ikeo K."/>
            <person name="Iwama A."/>
            <person name="Ishikawa T."/>
            <person name="Jakt M."/>
            <person name="Kanapin A."/>
            <person name="Katoh M."/>
            <person name="Kawasawa Y."/>
            <person name="Kelso J."/>
            <person name="Kitamura H."/>
            <person name="Kitano H."/>
            <person name="Kollias G."/>
            <person name="Krishnan S.P."/>
            <person name="Kruger A."/>
            <person name="Kummerfeld S.K."/>
            <person name="Kurochkin I.V."/>
            <person name="Lareau L.F."/>
            <person name="Lazarevic D."/>
            <person name="Lipovich L."/>
            <person name="Liu J."/>
            <person name="Liuni S."/>
            <person name="McWilliam S."/>
            <person name="Madan Babu M."/>
            <person name="Madera M."/>
            <person name="Marchionni L."/>
            <person name="Matsuda H."/>
            <person name="Matsuzawa S."/>
            <person name="Miki H."/>
            <person name="Mignone F."/>
            <person name="Miyake S."/>
            <person name="Morris K."/>
            <person name="Mottagui-Tabar S."/>
            <person name="Mulder N."/>
            <person name="Nakano N."/>
            <person name="Nakauchi H."/>
            <person name="Ng P."/>
            <person name="Nilsson R."/>
            <person name="Nishiguchi S."/>
            <person name="Nishikawa S."/>
            <person name="Nori F."/>
            <person name="Ohara O."/>
            <person name="Okazaki Y."/>
            <person name="Orlando V."/>
            <person name="Pang K.C."/>
            <person name="Pavan W.J."/>
            <person name="Pavesi G."/>
            <person name="Pesole G."/>
            <person name="Petrovsky N."/>
            <person name="Piazza S."/>
            <person name="Reed J."/>
            <person name="Reid J.F."/>
            <person name="Ring B.Z."/>
            <person name="Ringwald M."/>
            <person name="Rost B."/>
            <person name="Ruan Y."/>
            <person name="Salzberg S.L."/>
            <person name="Sandelin A."/>
            <person name="Schneider C."/>
            <person name="Schoenbach C."/>
            <person name="Sekiguchi K."/>
            <person name="Semple C.A."/>
            <person name="Seno S."/>
            <person name="Sessa L."/>
            <person name="Sheng Y."/>
            <person name="Shibata Y."/>
            <person name="Shimada H."/>
            <person name="Shimada K."/>
            <person name="Silva D."/>
            <person name="Sinclair B."/>
            <person name="Sperling S."/>
            <person name="Stupka E."/>
            <person name="Sugiura K."/>
            <person name="Sultana R."/>
            <person name="Takenaka Y."/>
            <person name="Taki K."/>
            <person name="Tammoja K."/>
            <person name="Tan S.L."/>
            <person name="Tang S."/>
            <person name="Taylor M.S."/>
            <person name="Tegner J."/>
            <person name="Teichmann S.A."/>
            <person name="Ueda H.R."/>
            <person name="van Nimwegen E."/>
            <person name="Verardo R."/>
            <person name="Wei C.L."/>
            <person name="Yagi K."/>
            <person name="Yamanishi H."/>
            <person name="Zabarovsky E."/>
            <person name="Zhu S."/>
            <person name="Zimmer A."/>
            <person name="Hide W."/>
            <person name="Bult C."/>
            <person name="Grimmond S.M."/>
            <person name="Teasdale R.D."/>
            <person name="Liu E.T."/>
            <person name="Brusic V."/>
            <person name="Quackenbush J."/>
            <person name="Wahlestedt C."/>
            <person name="Mattick J.S."/>
            <person name="Hume D.A."/>
            <person name="Kai C."/>
            <person name="Sasaki D."/>
            <person name="Tomaru Y."/>
            <person name="Fukuda S."/>
            <person name="Kanamori-Katayama M."/>
            <person name="Suzuki M."/>
            <person name="Aoki J."/>
            <person name="Arakawa T."/>
            <person name="Iida J."/>
            <person name="Imamura K."/>
            <person name="Itoh M."/>
            <person name="Kato T."/>
            <person name="Kawaji H."/>
            <person name="Kawagashira N."/>
            <person name="Kawashima T."/>
            <person name="Kojima M."/>
            <person name="Kondo S."/>
            <person name="Konno H."/>
            <person name="Nakano K."/>
            <person name="Ninomiya N."/>
            <person name="Nishio T."/>
            <person name="Okada M."/>
            <person name="Plessy C."/>
            <person name="Shibata K."/>
            <person name="Shiraki T."/>
            <person name="Suzuki S."/>
            <person name="Tagami M."/>
            <person name="Waki K."/>
            <person name="Watahiki A."/>
            <person name="Okamura-Oho Y."/>
            <person name="Suzuki H."/>
            <person name="Kawai J."/>
            <person name="Hayashizaki Y."/>
        </authorList>
    </citation>
    <scope>NUCLEOTIDE SEQUENCE [LARGE SCALE MRNA] (ISOFORM 2)</scope>
</reference>
<reference key="3">
    <citation type="journal article" date="2009" name="PLoS Biol.">
        <title>Lineage-specific biology revealed by a finished genome assembly of the mouse.</title>
        <authorList>
            <person name="Church D.M."/>
            <person name="Goodstadt L."/>
            <person name="Hillier L.W."/>
            <person name="Zody M.C."/>
            <person name="Goldstein S."/>
            <person name="She X."/>
            <person name="Bult C.J."/>
            <person name="Agarwala R."/>
            <person name="Cherry J.L."/>
            <person name="DiCuccio M."/>
            <person name="Hlavina W."/>
            <person name="Kapustin Y."/>
            <person name="Meric P."/>
            <person name="Maglott D."/>
            <person name="Birtle Z."/>
            <person name="Marques A.C."/>
            <person name="Graves T."/>
            <person name="Zhou S."/>
            <person name="Teague B."/>
            <person name="Potamousis K."/>
            <person name="Churas C."/>
            <person name="Place M."/>
            <person name="Herschleb J."/>
            <person name="Runnheim R."/>
            <person name="Forrest D."/>
            <person name="Amos-Landgraf J."/>
            <person name="Schwartz D.C."/>
            <person name="Cheng Z."/>
            <person name="Lindblad-Toh K."/>
            <person name="Eichler E.E."/>
            <person name="Ponting C.P."/>
        </authorList>
    </citation>
    <scope>NUCLEOTIDE SEQUENCE [LARGE SCALE GENOMIC DNA]</scope>
    <source>
        <strain>C57BL/6J</strain>
    </source>
</reference>
<reference key="4">
    <citation type="submission" date="2005-07" db="EMBL/GenBank/DDBJ databases">
        <authorList>
            <person name="Mural R.J."/>
            <person name="Adams M.D."/>
            <person name="Myers E.W."/>
            <person name="Smith H.O."/>
            <person name="Venter J.C."/>
        </authorList>
    </citation>
    <scope>NUCLEOTIDE SEQUENCE [LARGE SCALE GENOMIC DNA]</scope>
</reference>
<reference key="5">
    <citation type="journal article" date="2004" name="Genome Res.">
        <title>The status, quality, and expansion of the NIH full-length cDNA project: the Mammalian Gene Collection (MGC).</title>
        <authorList>
            <consortium name="The MGC Project Team"/>
        </authorList>
    </citation>
    <scope>NUCLEOTIDE SEQUENCE [LARGE SCALE MRNA] (ISOFORM 2)</scope>
    <source>
        <strain evidence="17">FVB/N</strain>
        <tissue evidence="17">Mammary tumor</tissue>
    </source>
</reference>
<reference key="6">
    <citation type="journal article" date="1997" name="J. Clin. Invest.">
        <title>Developmental regulation, expression, and apoptotic potential of galectin-9, a beta-galactoside binding lectin.</title>
        <authorList>
            <person name="Wada J."/>
            <person name="Ota K."/>
            <person name="Kumar A."/>
            <person name="Wallner E.I."/>
            <person name="Kanwar Y.S."/>
        </authorList>
    </citation>
    <scope>CHARACTERIZATION</scope>
</reference>
<reference key="7">
    <citation type="journal article" date="2010" name="Cell">
        <title>A tissue-specific atlas of mouse protein phosphorylation and expression.</title>
        <authorList>
            <person name="Huttlin E.L."/>
            <person name="Jedrychowski M.P."/>
            <person name="Elias J.E."/>
            <person name="Goswami T."/>
            <person name="Rad R."/>
            <person name="Beausoleil S.A."/>
            <person name="Villen J."/>
            <person name="Haas W."/>
            <person name="Sowa M.E."/>
            <person name="Gygi S.P."/>
        </authorList>
    </citation>
    <scope>IDENTIFICATION BY MASS SPECTROMETRY [LARGE SCALE ANALYSIS]</scope>
    <source>
        <tissue>Brown adipose tissue</tissue>
        <tissue>Heart</tissue>
        <tissue>Kidney</tissue>
        <tissue>Liver</tissue>
        <tissue>Lung</tissue>
        <tissue>Pancreas</tissue>
        <tissue>Spleen</tissue>
        <tissue>Testis</tissue>
    </source>
</reference>
<reference key="8">
    <citation type="journal article" date="2010" name="J. Exp. Med.">
        <title>Tim3 binding to galectin-9 stimulates antimicrobial immunity.</title>
        <authorList>
            <person name="Jayaraman P."/>
            <person name="Sada-Ovalle I."/>
            <person name="Beladi S."/>
            <person name="Anderson A.C."/>
            <person name="Dardalhon V."/>
            <person name="Hotta C."/>
            <person name="Kuchroo V.K."/>
            <person name="Behar S.M."/>
        </authorList>
    </citation>
    <scope>FUNCTION</scope>
    <scope>TISSUE SPECIFICITY</scope>
    <scope>INDUCTION</scope>
</reference>
<reference key="9">
    <citation type="journal article" date="2011" name="Proc. Natl. Acad. Sci. U.S.A.">
        <title>Galectin-9 binding to cell surface protein disulfide isomerase regulates the redox environment to enhance T-cell migration and HIV entry.</title>
        <authorList>
            <person name="Bi S."/>
            <person name="Hong P.W."/>
            <person name="Lee B."/>
            <person name="Baum L.G."/>
        </authorList>
    </citation>
    <scope>FUNCTION AS LIGAND FOR P4HB</scope>
</reference>
<reference key="10">
    <citation type="journal article" date="2013" name="Biol. Reprod.">
        <title>Profiling Lgals9 splice variant expression at the fetal-maternal interface: implications in normal and pathological human pregnancy.</title>
        <authorList>
            <person name="Heusschen R."/>
            <person name="Freitag N."/>
            <person name="Tirado-Gonzalez I."/>
            <person name="Barrientos G."/>
            <person name="Moschansky P."/>
            <person name="Munoz-Fernandez R."/>
            <person name="Leno-Duran E."/>
            <person name="Klapp B.F."/>
            <person name="Thijssen V.L."/>
            <person name="Blois S.M."/>
        </authorList>
    </citation>
    <scope>FUNCTION</scope>
    <scope>SUBCELLULAR LOCATION</scope>
    <scope>ALTERNATIVE SPLICING (ISOFORMS 1; 2 AND 3)</scope>
    <scope>TISSUE SPECIFICITY</scope>
</reference>
<reference key="11">
    <citation type="journal article" date="2013" name="J. Virol.">
        <title>Galectin-9 functionally impairs natural killer cells in humans and mice.</title>
        <authorList>
            <person name="Golden-Mason L."/>
            <person name="McMahan R.H."/>
            <person name="Strong M."/>
            <person name="Reisdorph R."/>
            <person name="Mahaffey S."/>
            <person name="Palmer B.E."/>
            <person name="Cheng L."/>
            <person name="Kulesza C."/>
            <person name="Hirashima M."/>
            <person name="Niki T."/>
            <person name="Rosen H.R."/>
        </authorList>
    </citation>
    <scope>FUNCTION</scope>
    <scope>DISRUPTION PHENOTYPE</scope>
</reference>
<reference key="12">
    <citation type="journal article" date="2014" name="Immunity">
        <title>Galectin-9-CD44 interaction enhances stability and function of adaptive regulatory T cells.</title>
        <authorList>
            <person name="Wu C."/>
            <person name="Thalhamer T."/>
            <person name="Franca R.F."/>
            <person name="Xiao S."/>
            <person name="Wang C."/>
            <person name="Hotta C."/>
            <person name="Zhu C."/>
            <person name="Hirashima M."/>
            <person name="Anderson A.C."/>
            <person name="Kuchroo V.K."/>
        </authorList>
    </citation>
    <scope>FUNCTION AS LIGAND FOR CD44</scope>
    <scope>TISSUE SPECIFICITY</scope>
    <scope>DISRUPTION PHENOTYPE</scope>
</reference>
<reference key="13">
    <citation type="journal article" date="2014" name="J. Neuroinflamm.">
        <title>Astrocyte galectin-9 potentiates microglial TNF secretion.</title>
        <authorList>
            <person name="Steelman A.J."/>
            <person name="Li J."/>
        </authorList>
    </citation>
    <scope>FUNCTION</scope>
    <scope>TISSUE SPECIFICITY</scope>
    <scope>INDUCTION</scope>
</reference>
<reference key="14">
    <citation type="journal article" date="2006" name="J. Biol. Chem.">
        <title>Crystal structure of the galectin-9 N-terminal carbohydrate recognition domain from Mus musculus reveals the basic mechanism of carbohydrate recognition.</title>
        <authorList>
            <person name="Nagae M."/>
            <person name="Nishi N."/>
            <person name="Murata T."/>
            <person name="Usui T."/>
            <person name="Nakamura T."/>
            <person name="Wakatsuki S."/>
            <person name="Kato R."/>
        </authorList>
    </citation>
    <scope>X-RAY CRYSTALLOGRAPHY (1.6 ANGSTROMS) OF 1-188 OF APOPROTEIN AND OF COMPLEX WITH CARBOHYDRATE</scope>
    <scope>SUBUNIT</scope>
</reference>
<dbReference type="EMBL" id="U55061">
    <property type="protein sequence ID" value="AAB51190.1"/>
    <property type="molecule type" value="mRNA"/>
</dbReference>
<dbReference type="EMBL" id="U55060">
    <property type="protein sequence ID" value="AAB51189.1"/>
    <property type="molecule type" value="mRNA"/>
</dbReference>
<dbReference type="EMBL" id="AK146044">
    <property type="protein sequence ID" value="BAE26856.1"/>
    <property type="molecule type" value="mRNA"/>
</dbReference>
<dbReference type="EMBL" id="AL592185">
    <property type="status" value="NOT_ANNOTATED_CDS"/>
    <property type="molecule type" value="Genomic_DNA"/>
</dbReference>
<dbReference type="EMBL" id="AL592551">
    <property type="status" value="NOT_ANNOTATED_CDS"/>
    <property type="molecule type" value="Genomic_DNA"/>
</dbReference>
<dbReference type="EMBL" id="CH466556">
    <property type="protein sequence ID" value="EDL15600.1"/>
    <property type="molecule type" value="Genomic_DNA"/>
</dbReference>
<dbReference type="EMBL" id="BC003754">
    <property type="protein sequence ID" value="AAH03754.1"/>
    <property type="molecule type" value="mRNA"/>
</dbReference>
<dbReference type="CCDS" id="CCDS25116.1">
    <molecule id="O08573-1"/>
</dbReference>
<dbReference type="CCDS" id="CCDS48858.1">
    <molecule id="O08573-2"/>
</dbReference>
<dbReference type="RefSeq" id="NP_001152773.1">
    <molecule id="O08573-2"/>
    <property type="nucleotide sequence ID" value="NM_001159301.1"/>
</dbReference>
<dbReference type="RefSeq" id="NP_034838.2">
    <property type="nucleotide sequence ID" value="NM_010708.2"/>
</dbReference>
<dbReference type="PDB" id="2D6K">
    <property type="method" value="X-ray"/>
    <property type="resolution" value="2.50 A"/>
    <property type="chains" value="A/B=1-147"/>
</dbReference>
<dbReference type="PDB" id="2D6L">
    <property type="method" value="X-ray"/>
    <property type="resolution" value="2.50 A"/>
    <property type="chains" value="X=1-147"/>
</dbReference>
<dbReference type="PDB" id="2D6M">
    <property type="method" value="X-ray"/>
    <property type="resolution" value="1.60 A"/>
    <property type="chains" value="A/B=1-147"/>
</dbReference>
<dbReference type="PDB" id="2D6N">
    <property type="method" value="X-ray"/>
    <property type="resolution" value="2.00 A"/>
    <property type="chains" value="A/B=1-147"/>
</dbReference>
<dbReference type="PDB" id="2D6O">
    <property type="method" value="X-ray"/>
    <property type="resolution" value="1.78 A"/>
    <property type="chains" value="X=1-147"/>
</dbReference>
<dbReference type="PDB" id="2D6P">
    <property type="method" value="X-ray"/>
    <property type="resolution" value="2.70 A"/>
    <property type="chains" value="A/B=1-147"/>
</dbReference>
<dbReference type="PDBsum" id="2D6K"/>
<dbReference type="PDBsum" id="2D6L"/>
<dbReference type="PDBsum" id="2D6M"/>
<dbReference type="PDBsum" id="2D6N"/>
<dbReference type="PDBsum" id="2D6O"/>
<dbReference type="PDBsum" id="2D6P"/>
<dbReference type="SMR" id="O08573"/>
<dbReference type="BioGRID" id="201147">
    <property type="interactions" value="8"/>
</dbReference>
<dbReference type="FunCoup" id="O08573">
    <property type="interactions" value="292"/>
</dbReference>
<dbReference type="IntAct" id="O08573">
    <property type="interactions" value="2"/>
</dbReference>
<dbReference type="STRING" id="10090.ENSMUSP00000103904"/>
<dbReference type="UniLectin" id="O08573"/>
<dbReference type="GlyGen" id="O08573">
    <property type="glycosylation" value="3 sites, 1 O-linked glycan (1 site)"/>
</dbReference>
<dbReference type="iPTMnet" id="O08573"/>
<dbReference type="PhosphoSitePlus" id="O08573"/>
<dbReference type="SwissPalm" id="O08573"/>
<dbReference type="jPOST" id="O08573"/>
<dbReference type="PaxDb" id="10090-ENSMUSP00000103903"/>
<dbReference type="ProteomicsDB" id="264732">
    <molecule id="O08573-1"/>
</dbReference>
<dbReference type="ProteomicsDB" id="264733">
    <molecule id="O08573-2"/>
</dbReference>
<dbReference type="ProteomicsDB" id="264734">
    <molecule id="O08573-3"/>
</dbReference>
<dbReference type="Pumba" id="O08573"/>
<dbReference type="DNASU" id="16859"/>
<dbReference type="Ensembl" id="ENSMUST00000108268.10">
    <molecule id="O08573-2"/>
    <property type="protein sequence ID" value="ENSMUSP00000103903.4"/>
    <property type="gene ID" value="ENSMUSG00000001123.16"/>
</dbReference>
<dbReference type="GeneID" id="16859"/>
<dbReference type="KEGG" id="mmu:16859"/>
<dbReference type="UCSC" id="uc007kke.2">
    <molecule id="O08573-2"/>
    <property type="organism name" value="mouse"/>
</dbReference>
<dbReference type="AGR" id="MGI:109496"/>
<dbReference type="CTD" id="3965"/>
<dbReference type="MGI" id="MGI:109496">
    <property type="gene designation" value="Lgals9"/>
</dbReference>
<dbReference type="VEuPathDB" id="HostDB:ENSMUSG00000001123"/>
<dbReference type="eggNOG" id="KOG3587">
    <property type="taxonomic scope" value="Eukaryota"/>
</dbReference>
<dbReference type="GeneTree" id="ENSGT00940000162258"/>
<dbReference type="HOGENOM" id="CLU_037794_1_0_1"/>
<dbReference type="InParanoid" id="O08573"/>
<dbReference type="OrthoDB" id="5795596at2759"/>
<dbReference type="PhylomeDB" id="O08573"/>
<dbReference type="TreeFam" id="TF315551"/>
<dbReference type="BioGRID-ORCS" id="16859">
    <property type="hits" value="2 hits in 81 CRISPR screens"/>
</dbReference>
<dbReference type="ChiTaRS" id="Lgals9">
    <property type="organism name" value="mouse"/>
</dbReference>
<dbReference type="EvolutionaryTrace" id="O08573"/>
<dbReference type="PRO" id="PR:O08573"/>
<dbReference type="Proteomes" id="UP000000589">
    <property type="component" value="Chromosome 11"/>
</dbReference>
<dbReference type="RNAct" id="O08573">
    <property type="molecule type" value="protein"/>
</dbReference>
<dbReference type="Bgee" id="ENSMUSG00000001123">
    <property type="expression patterns" value="Expressed in small intestine Peyer's patch and 199 other cell types or tissues"/>
</dbReference>
<dbReference type="ExpressionAtlas" id="O08573">
    <property type="expression patterns" value="baseline and differential"/>
</dbReference>
<dbReference type="GO" id="GO:0062023">
    <property type="term" value="C:collagen-containing extracellular matrix"/>
    <property type="evidence" value="ECO:0007005"/>
    <property type="project" value="BHF-UCL"/>
</dbReference>
<dbReference type="GO" id="GO:0005737">
    <property type="term" value="C:cytoplasm"/>
    <property type="evidence" value="ECO:0000314"/>
    <property type="project" value="UniProtKB"/>
</dbReference>
<dbReference type="GO" id="GO:0005576">
    <property type="term" value="C:extracellular region"/>
    <property type="evidence" value="ECO:0000304"/>
    <property type="project" value="Reactome"/>
</dbReference>
<dbReference type="GO" id="GO:0005634">
    <property type="term" value="C:nucleus"/>
    <property type="evidence" value="ECO:0000314"/>
    <property type="project" value="UniProtKB"/>
</dbReference>
<dbReference type="GO" id="GO:0005886">
    <property type="term" value="C:plasma membrane"/>
    <property type="evidence" value="ECO:0007669"/>
    <property type="project" value="GOC"/>
</dbReference>
<dbReference type="GO" id="GO:0030246">
    <property type="term" value="F:carbohydrate binding"/>
    <property type="evidence" value="ECO:0000314"/>
    <property type="project" value="UniProtKB"/>
</dbReference>
<dbReference type="GO" id="GO:0019899">
    <property type="term" value="F:enzyme binding"/>
    <property type="evidence" value="ECO:0000353"/>
    <property type="project" value="UniProtKB"/>
</dbReference>
<dbReference type="GO" id="GO:0016936">
    <property type="term" value="F:galactoside binding"/>
    <property type="evidence" value="ECO:0000315"/>
    <property type="project" value="UniProtKB"/>
</dbReference>
<dbReference type="GO" id="GO:0043539">
    <property type="term" value="F:protein serine/threonine kinase activator activity"/>
    <property type="evidence" value="ECO:0000314"/>
    <property type="project" value="UniProtKB"/>
</dbReference>
<dbReference type="GO" id="GO:0005102">
    <property type="term" value="F:signaling receptor binding"/>
    <property type="evidence" value="ECO:0000353"/>
    <property type="project" value="UniProtKB"/>
</dbReference>
<dbReference type="GO" id="GO:0098586">
    <property type="term" value="P:cellular response to virus"/>
    <property type="evidence" value="ECO:0000315"/>
    <property type="project" value="UniProtKB"/>
</dbReference>
<dbReference type="GO" id="GO:0006935">
    <property type="term" value="P:chemotaxis"/>
    <property type="evidence" value="ECO:0007669"/>
    <property type="project" value="UniProtKB-KW"/>
</dbReference>
<dbReference type="GO" id="GO:0007565">
    <property type="term" value="P:female pregnancy"/>
    <property type="evidence" value="ECO:0000314"/>
    <property type="project" value="UniProtKB"/>
</dbReference>
<dbReference type="GO" id="GO:0007157">
    <property type="term" value="P:heterophilic cell-cell adhesion via plasma membrane cell adhesion molecules"/>
    <property type="evidence" value="ECO:0000247"/>
    <property type="project" value="MGI"/>
</dbReference>
<dbReference type="GO" id="GO:0002376">
    <property type="term" value="P:immune system process"/>
    <property type="evidence" value="ECO:0007669"/>
    <property type="project" value="UniProtKB-KW"/>
</dbReference>
<dbReference type="GO" id="GO:0045185">
    <property type="term" value="P:maintenance of protein location"/>
    <property type="evidence" value="ECO:0000314"/>
    <property type="project" value="UniProtKB"/>
</dbReference>
<dbReference type="GO" id="GO:2000562">
    <property type="term" value="P:negative regulation of CD4-positive, alpha-beta T cell proliferation"/>
    <property type="evidence" value="ECO:0000315"/>
    <property type="project" value="UniProtKB"/>
</dbReference>
<dbReference type="GO" id="GO:0010629">
    <property type="term" value="P:negative regulation of gene expression"/>
    <property type="evidence" value="ECO:0000315"/>
    <property type="project" value="UniProtKB"/>
</dbReference>
<dbReference type="GO" id="GO:0050728">
    <property type="term" value="P:negative regulation of inflammatory response"/>
    <property type="evidence" value="ECO:0000315"/>
    <property type="project" value="UniProtKB"/>
</dbReference>
<dbReference type="GO" id="GO:0032815">
    <property type="term" value="P:negative regulation of natural killer cell activation"/>
    <property type="evidence" value="ECO:0000315"/>
    <property type="project" value="UniProtKB"/>
</dbReference>
<dbReference type="GO" id="GO:0043322">
    <property type="term" value="P:negative regulation of natural killer cell degranulation"/>
    <property type="evidence" value="ECO:0000315"/>
    <property type="project" value="UniProtKB"/>
</dbReference>
<dbReference type="GO" id="GO:0032689">
    <property type="term" value="P:negative regulation of type II interferon production"/>
    <property type="evidence" value="ECO:0000314"/>
    <property type="project" value="UniProtKB"/>
</dbReference>
<dbReference type="GO" id="GO:0032722">
    <property type="term" value="P:positive regulation of chemokine production"/>
    <property type="evidence" value="ECO:0000315"/>
    <property type="project" value="UniProtKB"/>
</dbReference>
<dbReference type="GO" id="GO:0001819">
    <property type="term" value="P:positive regulation of cytokine production"/>
    <property type="evidence" value="ECO:0000315"/>
    <property type="project" value="UniProtKB"/>
</dbReference>
<dbReference type="GO" id="GO:1900426">
    <property type="term" value="P:positive regulation of defense response to bacterium"/>
    <property type="evidence" value="ECO:0000315"/>
    <property type="project" value="UniProtKB"/>
</dbReference>
<dbReference type="GO" id="GO:0045089">
    <property type="term" value="P:positive regulation of innate immune response"/>
    <property type="evidence" value="ECO:0000315"/>
    <property type="project" value="UniProtKB"/>
</dbReference>
<dbReference type="GO" id="GO:0032732">
    <property type="term" value="P:positive regulation of interleukin-1 production"/>
    <property type="evidence" value="ECO:0000315"/>
    <property type="project" value="UniProtKB"/>
</dbReference>
<dbReference type="GO" id="GO:0032733">
    <property type="term" value="P:positive regulation of interleukin-10 production"/>
    <property type="evidence" value="ECO:0000315"/>
    <property type="project" value="UniProtKB"/>
</dbReference>
<dbReference type="GO" id="GO:0032755">
    <property type="term" value="P:positive regulation of interleukin-6 production"/>
    <property type="evidence" value="ECO:0000315"/>
    <property type="project" value="UniProtKB"/>
</dbReference>
<dbReference type="GO" id="GO:0043032">
    <property type="term" value="P:positive regulation of macrophage activation"/>
    <property type="evidence" value="ECO:0000315"/>
    <property type="project" value="UniProtKB"/>
</dbReference>
<dbReference type="GO" id="GO:0051353">
    <property type="term" value="P:positive regulation of oxidoreductase activity"/>
    <property type="evidence" value="ECO:0000314"/>
    <property type="project" value="UniProtKB"/>
</dbReference>
<dbReference type="GO" id="GO:0045591">
    <property type="term" value="P:positive regulation of regulatory T cell differentiation"/>
    <property type="evidence" value="ECO:0000315"/>
    <property type="project" value="UniProtKB"/>
</dbReference>
<dbReference type="GO" id="GO:0060391">
    <property type="term" value="P:positive regulation of SMAD protein signal transduction"/>
    <property type="evidence" value="ECO:0000315"/>
    <property type="project" value="UniProtKB"/>
</dbReference>
<dbReference type="GO" id="GO:2000406">
    <property type="term" value="P:positive regulation of T cell migration"/>
    <property type="evidence" value="ECO:0000314"/>
    <property type="project" value="UniProtKB"/>
</dbReference>
<dbReference type="GO" id="GO:0032760">
    <property type="term" value="P:positive regulation of tumor necrosis factor production"/>
    <property type="evidence" value="ECO:0000315"/>
    <property type="project" value="UniProtKB"/>
</dbReference>
<dbReference type="GO" id="GO:0043113">
    <property type="term" value="P:receptor clustering"/>
    <property type="evidence" value="ECO:0000314"/>
    <property type="project" value="UniProtKB"/>
</dbReference>
<dbReference type="GO" id="GO:0032823">
    <property type="term" value="P:regulation of natural killer cell differentiation"/>
    <property type="evidence" value="ECO:0000315"/>
    <property type="project" value="UniProtKB"/>
</dbReference>
<dbReference type="GO" id="GO:0032496">
    <property type="term" value="P:response to lipopolysaccharide"/>
    <property type="evidence" value="ECO:0000315"/>
    <property type="project" value="UniProtKB"/>
</dbReference>
<dbReference type="GO" id="GO:0007179">
    <property type="term" value="P:transforming growth factor beta receptor signaling pathway"/>
    <property type="evidence" value="ECO:0000315"/>
    <property type="project" value="UniProtKB"/>
</dbReference>
<dbReference type="CDD" id="cd00070">
    <property type="entry name" value="GLECT"/>
    <property type="match status" value="2"/>
</dbReference>
<dbReference type="FunFam" id="2.60.120.200:FF:000023">
    <property type="entry name" value="Galectin"/>
    <property type="match status" value="1"/>
</dbReference>
<dbReference type="FunFam" id="2.60.120.200:FF:000078">
    <property type="entry name" value="Galectin"/>
    <property type="match status" value="1"/>
</dbReference>
<dbReference type="Gene3D" id="2.60.120.200">
    <property type="match status" value="2"/>
</dbReference>
<dbReference type="InterPro" id="IPR013320">
    <property type="entry name" value="ConA-like_dom_sf"/>
</dbReference>
<dbReference type="InterPro" id="IPR044156">
    <property type="entry name" value="Galectin-like"/>
</dbReference>
<dbReference type="InterPro" id="IPR001079">
    <property type="entry name" value="Galectin_CRD"/>
</dbReference>
<dbReference type="PANTHER" id="PTHR11346">
    <property type="entry name" value="GALECTIN"/>
    <property type="match status" value="1"/>
</dbReference>
<dbReference type="PANTHER" id="PTHR11346:SF80">
    <property type="entry name" value="GALECTIN-9C"/>
    <property type="match status" value="1"/>
</dbReference>
<dbReference type="Pfam" id="PF00337">
    <property type="entry name" value="Gal-bind_lectin"/>
    <property type="match status" value="2"/>
</dbReference>
<dbReference type="SMART" id="SM00908">
    <property type="entry name" value="Gal-bind_lectin"/>
    <property type="match status" value="2"/>
</dbReference>
<dbReference type="SMART" id="SM00276">
    <property type="entry name" value="GLECT"/>
    <property type="match status" value="2"/>
</dbReference>
<dbReference type="SUPFAM" id="SSF49899">
    <property type="entry name" value="Concanavalin A-like lectins/glucanases"/>
    <property type="match status" value="2"/>
</dbReference>
<dbReference type="PROSITE" id="PS51304">
    <property type="entry name" value="GALECTIN"/>
    <property type="match status" value="2"/>
</dbReference>
<feature type="chain" id="PRO_0000076947" description="Galectin-9">
    <location>
        <begin position="1"/>
        <end position="353"/>
    </location>
</feature>
<feature type="domain" description="Galectin 1" evidence="4">
    <location>
        <begin position="17"/>
        <end position="147"/>
    </location>
</feature>
<feature type="domain" description="Galectin 2" evidence="4">
    <location>
        <begin position="225"/>
        <end position="353"/>
    </location>
</feature>
<feature type="region of interest" description="Disordered" evidence="5">
    <location>
        <begin position="167"/>
        <end position="186"/>
    </location>
</feature>
<feature type="binding site">
    <location>
        <position position="47"/>
    </location>
    <ligand>
        <name>a beta-D-galactoside</name>
        <dbReference type="ChEBI" id="CHEBI:28034"/>
        <label>1</label>
    </ligand>
</feature>
<feature type="binding site">
    <location>
        <position position="60"/>
    </location>
    <ligand>
        <name>a beta-D-galactoside</name>
        <dbReference type="ChEBI" id="CHEBI:28034"/>
        <label>1</label>
    </ligand>
</feature>
<feature type="binding site">
    <location>
        <position position="64"/>
    </location>
    <ligand>
        <name>a beta-D-galactoside</name>
        <dbReference type="ChEBI" id="CHEBI:28034"/>
        <label>1</label>
    </ligand>
</feature>
<feature type="binding site">
    <location>
        <position position="74"/>
    </location>
    <ligand>
        <name>a beta-D-galactoside</name>
        <dbReference type="ChEBI" id="CHEBI:28034"/>
        <label>1</label>
    </ligand>
</feature>
<feature type="binding site">
    <location>
        <begin position="81"/>
        <end position="87"/>
    </location>
    <ligand>
        <name>a beta-D-galactoside</name>
        <dbReference type="ChEBI" id="CHEBI:28034"/>
        <label>1</label>
    </ligand>
</feature>
<feature type="binding site" evidence="1">
    <location>
        <position position="265"/>
    </location>
    <ligand>
        <name>a beta-D-galactoside</name>
        <dbReference type="ChEBI" id="CHEBI:28034"/>
        <label>2</label>
    </ligand>
</feature>
<feature type="binding site" evidence="1">
    <location>
        <position position="269"/>
    </location>
    <ligand>
        <name>a beta-D-galactoside</name>
        <dbReference type="ChEBI" id="CHEBI:28034"/>
        <label>2</label>
    </ligand>
</feature>
<feature type="binding site" evidence="1">
    <location>
        <position position="279"/>
    </location>
    <ligand>
        <name>a beta-D-galactoside</name>
        <dbReference type="ChEBI" id="CHEBI:28034"/>
        <label>2</label>
    </ligand>
</feature>
<feature type="binding site" evidence="1">
    <location>
        <begin position="285"/>
        <end position="291"/>
    </location>
    <ligand>
        <name>a beta-D-galactoside</name>
        <dbReference type="ChEBI" id="CHEBI:28034"/>
        <label>2</label>
    </ligand>
</feature>
<feature type="splice variant" id="VSP_003097" description="In isoform 2 and isoform 3." evidence="8 13">
    <location>
        <begin position="148"/>
        <end position="178"/>
    </location>
</feature>
<feature type="splice variant" id="VSP_057844" description="In isoform 3." evidence="8">
    <location>
        <begin position="179"/>
        <end position="190"/>
    </location>
</feature>
<feature type="sequence conflict" description="In Ref. 5; AAH03754." evidence="15" ref="5">
    <original>N</original>
    <variation>D</variation>
    <location>
        <position position="181"/>
    </location>
</feature>
<feature type="strand" evidence="18">
    <location>
        <begin position="4"/>
        <end position="12"/>
    </location>
</feature>
<feature type="strand" evidence="18">
    <location>
        <begin position="15"/>
        <end position="20"/>
    </location>
</feature>
<feature type="strand" evidence="18">
    <location>
        <begin position="30"/>
        <end position="37"/>
    </location>
</feature>
<feature type="strand" evidence="18">
    <location>
        <begin position="43"/>
        <end position="51"/>
    </location>
</feature>
<feature type="strand" evidence="18">
    <location>
        <begin position="57"/>
        <end position="64"/>
    </location>
</feature>
<feature type="strand" evidence="18">
    <location>
        <begin position="70"/>
        <end position="77"/>
    </location>
</feature>
<feature type="strand" evidence="18">
    <location>
        <begin position="85"/>
        <end position="87"/>
    </location>
</feature>
<feature type="strand" evidence="18">
    <location>
        <begin position="97"/>
        <end position="104"/>
    </location>
</feature>
<feature type="strand" evidence="18">
    <location>
        <begin position="106"/>
        <end position="113"/>
    </location>
</feature>
<feature type="strand" evidence="18">
    <location>
        <begin position="116"/>
        <end position="122"/>
    </location>
</feature>
<feature type="helix" evidence="18">
    <location>
        <begin position="127"/>
        <end position="129"/>
    </location>
</feature>
<feature type="strand" evidence="18">
    <location>
        <begin position="132"/>
        <end position="147"/>
    </location>
</feature>
<comment type="function">
    <text evidence="2 3 6 7 9 10 11">Binds galactosides (By similarity). Has high affinity for the Forssman pentasaccharide (By similarity). Ligand for HAVCR2/TIM3 (By similarity). Binding to HAVCR2 induces T-helper type 1 lymphocyte (Th1) death (By similarity). Also stimulates bactericidal activity in infected macrophages by causing macrophage activation and IL1B secretion which restricts intracellular bacterial growth (PubMed:20937702). Ligand for P4HB; the interaction retains P4HB at the cell surface of Th2 T-helper cells, increasing disulfide reductase activity at the plasma membrane, altering the plasma membrane redox state and enhancing cell migration (PubMed:21670307). Ligand for CD44; the interaction enhances binding of SMAD3 to the FOXP3 promoter, leading to up-regulation of FOXP3 expression and increased induced regulatory T (iTreg) cell stability and suppressive function (PubMed:25065622). Promotes ability of mesenchymal stromal cells to suppress T-cell proliferation (By similarity). Expands regulatory T-cells and induces cytotoxic T-cell apoptosis following virus infection (By similarity). Activates ERK1/2 phosphorylation inducing cytokine (IL-6, IL-8, IL-12) and chemokine (CCL2) production in mast and dendritic cells (By similarity). Inhibits degranulation and induces apoptosis of mast cells (By similarity). Induces maturation and migration of dendritic cells (By similarity). Inhibits natural killer (NK) cell function (PubMed:23408620). Can transform NK cell phenotype from peripheral to decidual during pregnancy (By similarity). Astrocyte derived galectin-9 enhances microglial TNF production (PubMed:25158758). May play a role in thymocyte-epithelial interactions relevant to the biology of the thymus. May provide the molecular basis for urate flux across cell membranes, allowing urate that is formed during purine metabolism to efflux from cells and serving as an electrogenic transporter that plays an important role in renal and gastrointestinal urate excretion (By similarity). Highly selective to the anion urate (By similarity).</text>
</comment>
<comment type="function">
    <molecule>Isoform 2</molecule>
    <text evidence="2 8">Acts as an eosinophil chemoattractant (By similarity). It also inhibits angiogenesis (By similarity). Suppresses IFNG production by natural killer cells.</text>
</comment>
<comment type="subunit">
    <text evidence="16">Homodimer.</text>
</comment>
<comment type="interaction">
    <interactant intactId="EBI-8377586">
        <id>O08573</id>
    </interactant>
    <interactant intactId="EBI-7565891">
        <id>P15379</id>
        <label>Cd44</label>
    </interactant>
    <organismsDiffer>false</organismsDiffer>
    <experiments>2</experiments>
</comment>
<comment type="interaction">
    <interactant intactId="EBI-11316797">
        <id>O08573-2</id>
    </interactant>
    <interactant intactId="EBI-6665112">
        <id>Q8VIM0</id>
        <label>Havcr2</label>
    </interactant>
    <organismsDiffer>false</organismsDiffer>
    <experiments>4</experiments>
</comment>
<comment type="subcellular location">
    <subcellularLocation>
        <location evidence="8">Cytoplasm</location>
    </subcellularLocation>
    <subcellularLocation>
        <location evidence="8">Nucleus</location>
    </subcellularLocation>
    <subcellularLocation>
        <location evidence="2">Secreted</location>
    </subcellularLocation>
    <text evidence="2 12">May also be secreted by a non-classical secretory pathway (PubMed:9038233). Secreted by mesenchymal stromal cells upon IFNG stimulation (By similarity).</text>
</comment>
<comment type="alternative products">
    <event type="alternative splicing"/>
    <isoform>
        <id>O08573-1</id>
        <name>1</name>
        <name>Long</name>
        <name evidence="14">FL</name>
        <sequence type="displayed"/>
    </isoform>
    <isoform>
        <id>O08573-2</id>
        <name>2</name>
        <name>Short</name>
        <name evidence="14">D5</name>
        <sequence type="described" ref="VSP_003097"/>
    </isoform>
    <isoform>
        <id>O08573-3</id>
        <name>3</name>
        <name evidence="14">D5/6</name>
        <sequence type="described" ref="VSP_003097 VSP_057844"/>
    </isoform>
</comment>
<comment type="tissue specificity">
    <text evidence="6 8 10 11">Accentuated expression in liver and thymus of embryo, detected in embryonic heart, brain, lung, liver, and kidney. Highly expressed in adult thymus, small intestine, and liver, and to a lesser extent in lung, kidney, spleen, cardiac, and skeletal muscle. Barely detectable in brain and reticulocyte. Expressed in placenta, uterus and decidua during pregnancy (PubMed:23242525). Expressed in CD4+ T-cells with higher levels in iTreg cells than other T-cell types and sustained high levels throughout iTreg cell differentiation (at protein level) (PubMed:25065622). Expressed in myeloid cells in lung (PubMed:20937702). Constitutively expressed in microglia (PubMed:25158758). Isoform 1 is expressed exclusively in the small intestine. Isoform 2 expression in decidua increases in pathological pregnancy from gestation day 7.5 to 13.5 and it is higher than in normal pregnancy (PubMed:23242525). Isoform 3 expression in decidua is higher in normal pregnancy than in pathological pregnancy (PubMed:23242525).</text>
</comment>
<comment type="developmental stage">
    <text>The expression increases with successive stages of embryonic development.</text>
</comment>
<comment type="induction">
    <text evidence="6 11">By viral mimic polyinosinic:polycytidylic acid (poly I:C) and lipopolysaccharides (LPS) in microglia (PubMed:25158758). Up-regulated in macrophages following infection with Mycobacterium tuberculosis (PubMed:20937702).</text>
</comment>
<comment type="domain">
    <text>Contains two homologous but distinct carbohydrate-binding domains.</text>
</comment>
<comment type="disruption phenotype">
    <text evidence="9 10">Increased natural killer (NK) cell activity with enhanced degranulation, higher expression of NK cell activating receptors, increased frequency of intermediate and mature NK cells, and greater production of interferon-gamma following murine cytomegalovirus infection (PubMed:23408620). Defective iTreg cell differentiation with impaired Foxp3 expression, reduced stability and suppressor function of iTreg cells and reduced frequency of iTreg cells but not natural regulatory T (nTreg) cells in lamina propria (PubMed:25065622).</text>
</comment>
<sequence>MALFSAQSPYINPIIPFTGPIQGGLQEGLQVTLQGTTKSFAQRFVVNFQNSFNGNDIAFHFNPRFEEGGYVVCNTKQNGQWGPEERKMQMPFQKGMPFELCFLVQRSEFKVMVNKKFFVQYQHRVPYHLVDTIAVSGCLKLSFITFQNSAAPVQHVFSTLQFSQPVQFPRTPKGRKQKTQNFRPAHQAPMAQTTIHMVHSTPGQMFSTPGIPPVVYPTPAYTIPFYTPIPNGLYPSKSIMISGNVLPDATRFHINLRCGGDIAFHLNPRFNENAVVRNTQINNSWGQEERSLLGRMPFSRGQSFSVWIICEGHCFKVAVNGQHMCEYYHRLKNLQDINTLEVAGDIQLTHVQT</sequence>
<protein>
    <recommendedName>
        <fullName>Galectin-9</fullName>
        <shortName>Gal-9</shortName>
    </recommendedName>
</protein>
<organism>
    <name type="scientific">Mus musculus</name>
    <name type="common">Mouse</name>
    <dbReference type="NCBI Taxonomy" id="10090"/>
    <lineage>
        <taxon>Eukaryota</taxon>
        <taxon>Metazoa</taxon>
        <taxon>Chordata</taxon>
        <taxon>Craniata</taxon>
        <taxon>Vertebrata</taxon>
        <taxon>Euteleostomi</taxon>
        <taxon>Mammalia</taxon>
        <taxon>Eutheria</taxon>
        <taxon>Euarchontoglires</taxon>
        <taxon>Glires</taxon>
        <taxon>Rodentia</taxon>
        <taxon>Myomorpha</taxon>
        <taxon>Muroidea</taxon>
        <taxon>Muridae</taxon>
        <taxon>Murinae</taxon>
        <taxon>Mus</taxon>
        <taxon>Mus</taxon>
    </lineage>
</organism>
<gene>
    <name type="primary">Lgals9</name>
</gene>
<name>LEG9_MOUSE</name>
<proteinExistence type="evidence at protein level"/>
<keyword id="KW-0002">3D-structure</keyword>
<keyword id="KW-0025">Alternative splicing</keyword>
<keyword id="KW-0145">Chemotaxis</keyword>
<keyword id="KW-0963">Cytoplasm</keyword>
<keyword id="KW-0391">Immunity</keyword>
<keyword id="KW-0430">Lectin</keyword>
<keyword id="KW-0539">Nucleus</keyword>
<keyword id="KW-1185">Reference proteome</keyword>
<keyword id="KW-0677">Repeat</keyword>
<keyword id="KW-0964">Secreted</keyword>